<sequence>MNPLRVIVKEEELDFAAAAAAAAAGEGSPSSWAVGVMDLPRPMEGLGEAGPPPFLCKTYEVVDDPGTDTVISWGFAGNSFVVWDANAFAAVLLPRYFKHSNFSSFVRQLNTYGFRKVDPDRWEFANEGFLRGKKELLKTIKRRRPPPSSPPSSSSSSSSSQHQQQPAAACLEVGQFGRDGVVNRLQRDKSVLIAEVVKLRQEQQTTRAQMQAMEERISAAEQKQQQMTVFLARAMKNPGFLQMLVDRQAGQHGARNRVLEDALSKKRRRPIEYLLTRNGETCAAGESAAMLAADGVAEPDGDTTPRGDGGGGGGGDTESFWMQLLSLGLEEKQREDGVAGGVQESNSGGADVDNDEEDDDDDVDVLVQSIYHLSPK</sequence>
<organism>
    <name type="scientific">Oryza sativa subsp. japonica</name>
    <name type="common">Rice</name>
    <dbReference type="NCBI Taxonomy" id="39947"/>
    <lineage>
        <taxon>Eukaryota</taxon>
        <taxon>Viridiplantae</taxon>
        <taxon>Streptophyta</taxon>
        <taxon>Embryophyta</taxon>
        <taxon>Tracheophyta</taxon>
        <taxon>Spermatophyta</taxon>
        <taxon>Magnoliopsida</taxon>
        <taxon>Liliopsida</taxon>
        <taxon>Poales</taxon>
        <taxon>Poaceae</taxon>
        <taxon>BOP clade</taxon>
        <taxon>Oryzoideae</taxon>
        <taxon>Oryzeae</taxon>
        <taxon>Oryzinae</taxon>
        <taxon>Oryza</taxon>
        <taxon>Oryza sativa</taxon>
    </lineage>
</organism>
<proteinExistence type="evidence at transcript level"/>
<gene>
    <name type="primary">HSFA2A</name>
    <name type="synonym">HSF11</name>
    <name type="synonym">HSF4</name>
    <name type="synonym">RHSP2</name>
    <name type="ordered locus">Os03g0745000</name>
    <name type="ordered locus">LOC_Os03g53340</name>
    <name type="ORF">OsJ_012039</name>
    <name type="ORF">OSJNBb0036F07.17</name>
</gene>
<protein>
    <recommendedName>
        <fullName>Heat stress transcription factor A-2a</fullName>
    </recommendedName>
    <alternativeName>
        <fullName>Heat shock protein 41</fullName>
    </alternativeName>
    <alternativeName>
        <fullName>Heat stress transcription factor 11</fullName>
        <shortName>OsHsf-11</shortName>
    </alternativeName>
    <alternativeName>
        <fullName>Heat stress transcription factor 4</fullName>
        <shortName>rHsf4</shortName>
    </alternativeName>
</protein>
<evidence type="ECO:0000250" key="1"/>
<evidence type="ECO:0000255" key="2"/>
<evidence type="ECO:0000256" key="3">
    <source>
        <dbReference type="SAM" id="MobiDB-lite"/>
    </source>
</evidence>
<evidence type="ECO:0000269" key="4">
    <source>
    </source>
</evidence>
<evidence type="ECO:0000269" key="5">
    <source>
    </source>
</evidence>
<evidence type="ECO:0000303" key="6">
    <source>
    </source>
</evidence>
<evidence type="ECO:0000305" key="7"/>
<name>HFA2A_ORYSJ</name>
<feature type="chain" id="PRO_0000350821" description="Heat stress transcription factor A-2a">
    <location>
        <begin position="1"/>
        <end position="376"/>
    </location>
</feature>
<feature type="region of interest" description="Disordered" evidence="3">
    <location>
        <begin position="137"/>
        <end position="168"/>
    </location>
</feature>
<feature type="region of interest" description="Hydrophobic repeat HR-A/B">
    <location>
        <begin position="185"/>
        <end position="235"/>
    </location>
</feature>
<feature type="region of interest" description="Disordered" evidence="3">
    <location>
        <begin position="296"/>
        <end position="319"/>
    </location>
</feature>
<feature type="region of interest" description="Disordered" evidence="3">
    <location>
        <begin position="332"/>
        <end position="362"/>
    </location>
</feature>
<feature type="coiled-coil region" evidence="2">
    <location>
        <begin position="182"/>
        <end position="229"/>
    </location>
</feature>
<feature type="short sequence motif" description="Nuclear localization signal" evidence="2">
    <location>
        <begin position="265"/>
        <end position="269"/>
    </location>
</feature>
<feature type="short sequence motif" description="AHA">
    <location>
        <begin position="318"/>
        <end position="325"/>
    </location>
</feature>
<feature type="short sequence motif" description="Nuclear export signal" evidence="2">
    <location>
        <begin position="366"/>
        <end position="373"/>
    </location>
</feature>
<feature type="compositionally biased region" description="Low complexity" evidence="3">
    <location>
        <begin position="151"/>
        <end position="160"/>
    </location>
</feature>
<feature type="compositionally biased region" description="Gly residues" evidence="3">
    <location>
        <begin position="307"/>
        <end position="316"/>
    </location>
</feature>
<feature type="compositionally biased region" description="Acidic residues" evidence="3">
    <location>
        <begin position="352"/>
        <end position="362"/>
    </location>
</feature>
<feature type="splice variant" id="VSP_035441" description="In isoform 2." evidence="6">
    <location>
        <begin position="1"/>
        <end position="88"/>
    </location>
</feature>
<feature type="splice variant" id="VSP_035442" description="In isoform 2." evidence="6">
    <original>AAVLLPRYFKHSNFSSFVRQLNTYGFR</original>
    <variation>MRSPPCSSRATSSTATSPASSASSTPT</variation>
    <location>
        <begin position="89"/>
        <end position="115"/>
    </location>
</feature>
<comment type="function">
    <text evidence="1">Transcriptional regulator that specifically binds DNA of heat shock promoter elements (HSE).</text>
</comment>
<comment type="subunit">
    <text evidence="1">Homotrimer.</text>
</comment>
<comment type="subcellular location">
    <subcellularLocation>
        <location evidence="7">Cytoplasm</location>
    </subcellularLocation>
    <subcellularLocation>
        <location evidence="7">Nucleus</location>
    </subcellularLocation>
</comment>
<comment type="alternative products">
    <event type="alternative splicing"/>
    <isoform>
        <id>Q84MN7-1</id>
        <name>1</name>
        <sequence type="displayed"/>
    </isoform>
    <isoform>
        <id>Q84MN7-2</id>
        <name>2</name>
        <sequence type="described" ref="VSP_035441 VSP_035442"/>
    </isoform>
</comment>
<comment type="induction">
    <text evidence="4">Not induced by heat stress.</text>
</comment>
<comment type="domain">
    <text evidence="5">The hydrophobic-rich region (HR-A/B) corresponds to the oligomerization domain. AHA motifs are transcriptional activator elements.</text>
</comment>
<comment type="PTM">
    <text evidence="1">Exhibits temperature-dependent phosphorylation.</text>
</comment>
<comment type="similarity">
    <text evidence="7">Belongs to the HSF family. Class A subfamily.</text>
</comment>
<reference key="1">
    <citation type="submission" date="2003-07" db="EMBL/GenBank/DDBJ databases">
        <title>Isolation rice heat shock factor by modified yeast one-hybrid system method.</title>
        <authorList>
            <person name="Yao Q.-H."/>
            <person name="Peng R.-H."/>
            <person name="Xiong A.-S."/>
        </authorList>
    </citation>
    <scope>NUCLEOTIDE SEQUENCE [MRNA] (ISOFORM 1)</scope>
</reference>
<reference key="2">
    <citation type="submission" date="2005-04" db="EMBL/GenBank/DDBJ databases">
        <title>Oryza sativa heat shock protein 41 mRNA.</title>
        <authorList>
            <person name="Li K.G."/>
            <person name="Yang J.S."/>
        </authorList>
    </citation>
    <scope>NUCLEOTIDE SEQUENCE [MRNA] (ISOFORM 1)</scope>
</reference>
<reference key="3">
    <citation type="journal article" date="2005" name="Genome Res.">
        <title>Sequence, annotation, and analysis of synteny between rice chromosome 3 and diverged grass species.</title>
        <authorList>
            <consortium name="The rice chromosome 3 sequencing consortium"/>
            <person name="Buell C.R."/>
            <person name="Yuan Q."/>
            <person name="Ouyang S."/>
            <person name="Liu J."/>
            <person name="Zhu W."/>
            <person name="Wang A."/>
            <person name="Maiti R."/>
            <person name="Haas B."/>
            <person name="Wortman J."/>
            <person name="Pertea M."/>
            <person name="Jones K.M."/>
            <person name="Kim M."/>
            <person name="Overton L."/>
            <person name="Tsitrin T."/>
            <person name="Fadrosh D."/>
            <person name="Bera J."/>
            <person name="Weaver B."/>
            <person name="Jin S."/>
            <person name="Johri S."/>
            <person name="Reardon M."/>
            <person name="Webb K."/>
            <person name="Hill J."/>
            <person name="Moffat K."/>
            <person name="Tallon L."/>
            <person name="Van Aken S."/>
            <person name="Lewis M."/>
            <person name="Utterback T."/>
            <person name="Feldblyum T."/>
            <person name="Zismann V."/>
            <person name="Iobst S."/>
            <person name="Hsiao J."/>
            <person name="de Vazeille A.R."/>
            <person name="Salzberg S.L."/>
            <person name="White O."/>
            <person name="Fraser C.M."/>
            <person name="Yu Y."/>
            <person name="Kim H."/>
            <person name="Rambo T."/>
            <person name="Currie J."/>
            <person name="Collura K."/>
            <person name="Kernodle-Thompson S."/>
            <person name="Wei F."/>
            <person name="Kudrna K."/>
            <person name="Ammiraju J.S.S."/>
            <person name="Luo M."/>
            <person name="Goicoechea J.L."/>
            <person name="Wing R.A."/>
            <person name="Henry D."/>
            <person name="Oates R."/>
            <person name="Palmer M."/>
            <person name="Pries G."/>
            <person name="Saski C."/>
            <person name="Simmons J."/>
            <person name="Soderlund C."/>
            <person name="Nelson W."/>
            <person name="de la Bastide M."/>
            <person name="Spiegel L."/>
            <person name="Nascimento L."/>
            <person name="Huang E."/>
            <person name="Preston R."/>
            <person name="Zutavern T."/>
            <person name="Palmer L."/>
            <person name="O'Shaughnessy A."/>
            <person name="Dike S."/>
            <person name="McCombie W.R."/>
            <person name="Minx P."/>
            <person name="Cordum H."/>
            <person name="Wilson R."/>
            <person name="Jin W."/>
            <person name="Lee H.R."/>
            <person name="Jiang J."/>
            <person name="Jackson S."/>
        </authorList>
    </citation>
    <scope>NUCLEOTIDE SEQUENCE [LARGE SCALE GENOMIC DNA]</scope>
    <source>
        <strain>cv. Nipponbare</strain>
    </source>
</reference>
<reference key="4">
    <citation type="journal article" date="2005" name="Nature">
        <title>The map-based sequence of the rice genome.</title>
        <authorList>
            <consortium name="International rice genome sequencing project (IRGSP)"/>
        </authorList>
    </citation>
    <scope>NUCLEOTIDE SEQUENCE [LARGE SCALE GENOMIC DNA]</scope>
    <source>
        <strain>cv. Nipponbare</strain>
    </source>
</reference>
<reference key="5">
    <citation type="journal article" date="2008" name="Nucleic Acids Res.">
        <title>The rice annotation project database (RAP-DB): 2008 update.</title>
        <authorList>
            <consortium name="The rice annotation project (RAP)"/>
        </authorList>
    </citation>
    <scope>GENOME REANNOTATION</scope>
    <source>
        <strain>cv. Nipponbare</strain>
    </source>
</reference>
<reference key="6">
    <citation type="journal article" date="2013" name="Rice">
        <title>Improvement of the Oryza sativa Nipponbare reference genome using next generation sequence and optical map data.</title>
        <authorList>
            <person name="Kawahara Y."/>
            <person name="de la Bastide M."/>
            <person name="Hamilton J.P."/>
            <person name="Kanamori H."/>
            <person name="McCombie W.R."/>
            <person name="Ouyang S."/>
            <person name="Schwartz D.C."/>
            <person name="Tanaka T."/>
            <person name="Wu J."/>
            <person name="Zhou S."/>
            <person name="Childs K.L."/>
            <person name="Davidson R.M."/>
            <person name="Lin H."/>
            <person name="Quesada-Ocampo L."/>
            <person name="Vaillancourt B."/>
            <person name="Sakai H."/>
            <person name="Lee S.S."/>
            <person name="Kim J."/>
            <person name="Numa H."/>
            <person name="Itoh T."/>
            <person name="Buell C.R."/>
            <person name="Matsumoto T."/>
        </authorList>
    </citation>
    <scope>GENOME REANNOTATION</scope>
    <source>
        <strain>cv. Nipponbare</strain>
    </source>
</reference>
<reference key="7">
    <citation type="journal article" date="2005" name="PLoS Biol.">
        <title>The genomes of Oryza sativa: a history of duplications.</title>
        <authorList>
            <person name="Yu J."/>
            <person name="Wang J."/>
            <person name="Lin W."/>
            <person name="Li S."/>
            <person name="Li H."/>
            <person name="Zhou J."/>
            <person name="Ni P."/>
            <person name="Dong W."/>
            <person name="Hu S."/>
            <person name="Zeng C."/>
            <person name="Zhang J."/>
            <person name="Zhang Y."/>
            <person name="Li R."/>
            <person name="Xu Z."/>
            <person name="Li S."/>
            <person name="Li X."/>
            <person name="Zheng H."/>
            <person name="Cong L."/>
            <person name="Lin L."/>
            <person name="Yin J."/>
            <person name="Geng J."/>
            <person name="Li G."/>
            <person name="Shi J."/>
            <person name="Liu J."/>
            <person name="Lv H."/>
            <person name="Li J."/>
            <person name="Wang J."/>
            <person name="Deng Y."/>
            <person name="Ran L."/>
            <person name="Shi X."/>
            <person name="Wang X."/>
            <person name="Wu Q."/>
            <person name="Li C."/>
            <person name="Ren X."/>
            <person name="Wang J."/>
            <person name="Wang X."/>
            <person name="Li D."/>
            <person name="Liu D."/>
            <person name="Zhang X."/>
            <person name="Ji Z."/>
            <person name="Zhao W."/>
            <person name="Sun Y."/>
            <person name="Zhang Z."/>
            <person name="Bao J."/>
            <person name="Han Y."/>
            <person name="Dong L."/>
            <person name="Ji J."/>
            <person name="Chen P."/>
            <person name="Wu S."/>
            <person name="Liu J."/>
            <person name="Xiao Y."/>
            <person name="Bu D."/>
            <person name="Tan J."/>
            <person name="Yang L."/>
            <person name="Ye C."/>
            <person name="Zhang J."/>
            <person name="Xu J."/>
            <person name="Zhou Y."/>
            <person name="Yu Y."/>
            <person name="Zhang B."/>
            <person name="Zhuang S."/>
            <person name="Wei H."/>
            <person name="Liu B."/>
            <person name="Lei M."/>
            <person name="Yu H."/>
            <person name="Li Y."/>
            <person name="Xu H."/>
            <person name="Wei S."/>
            <person name="He X."/>
            <person name="Fang L."/>
            <person name="Zhang Z."/>
            <person name="Zhang Y."/>
            <person name="Huang X."/>
            <person name="Su Z."/>
            <person name="Tong W."/>
            <person name="Li J."/>
            <person name="Tong Z."/>
            <person name="Li S."/>
            <person name="Ye J."/>
            <person name="Wang L."/>
            <person name="Fang L."/>
            <person name="Lei T."/>
            <person name="Chen C.-S."/>
            <person name="Chen H.-C."/>
            <person name="Xu Z."/>
            <person name="Li H."/>
            <person name="Huang H."/>
            <person name="Zhang F."/>
            <person name="Xu H."/>
            <person name="Li N."/>
            <person name="Zhao C."/>
            <person name="Li S."/>
            <person name="Dong L."/>
            <person name="Huang Y."/>
            <person name="Li L."/>
            <person name="Xi Y."/>
            <person name="Qi Q."/>
            <person name="Li W."/>
            <person name="Zhang B."/>
            <person name="Hu W."/>
            <person name="Zhang Y."/>
            <person name="Tian X."/>
            <person name="Jiao Y."/>
            <person name="Liang X."/>
            <person name="Jin J."/>
            <person name="Gao L."/>
            <person name="Zheng W."/>
            <person name="Hao B."/>
            <person name="Liu S.-M."/>
            <person name="Wang W."/>
            <person name="Yuan L."/>
            <person name="Cao M."/>
            <person name="McDermott J."/>
            <person name="Samudrala R."/>
            <person name="Wang J."/>
            <person name="Wong G.K.-S."/>
            <person name="Yang H."/>
        </authorList>
    </citation>
    <scope>NUCLEOTIDE SEQUENCE [LARGE SCALE GENOMIC DNA]</scope>
    <source>
        <strain>cv. Nipponbare</strain>
    </source>
</reference>
<reference key="8">
    <citation type="journal article" date="2003" name="Science">
        <title>Collection, mapping, and annotation of over 28,000 cDNA clones from japonica rice.</title>
        <authorList>
            <consortium name="The rice full-length cDNA consortium"/>
        </authorList>
    </citation>
    <scope>NUCLEOTIDE SEQUENCE [LARGE SCALE MRNA] (ISOFORM 2)</scope>
    <source>
        <strain>cv. Nipponbare</strain>
    </source>
</reference>
<reference key="9">
    <citation type="journal article" date="2004" name="J. Biosci.">
        <title>Heat stress response in plants: a complex game with chaperones and more than twenty heat stress transcription factors.</title>
        <authorList>
            <person name="Baniwal S.K."/>
            <person name="Bharti K."/>
            <person name="Chan K.Y."/>
            <person name="Fauth M."/>
            <person name="Ganguli A."/>
            <person name="Kotak S."/>
            <person name="Mishra S.K."/>
            <person name="Nover L."/>
            <person name="Port M."/>
            <person name="Scharf K.-D."/>
            <person name="Tripp J."/>
            <person name="Weber C."/>
            <person name="Zielinski D."/>
            <person name="von Koskull-Doering P."/>
        </authorList>
    </citation>
    <scope>GENE FAMILY</scope>
    <scope>NOMENCLATURE</scope>
</reference>
<reference key="10">
    <citation type="journal article" date="2008" name="J. Genet. Genomics">
        <title>Genome-wide analysis of heat shock transcription factor families in rice and Arabidopsis.</title>
        <authorList>
            <person name="Guo J."/>
            <person name="Wu J."/>
            <person name="Ji Q."/>
            <person name="Wang C."/>
            <person name="Luo L."/>
            <person name="Yuan Y."/>
            <person name="Wang Y."/>
            <person name="Wang J."/>
        </authorList>
    </citation>
    <scope>GENE FAMILY</scope>
    <scope>NOMENCLATURE</scope>
    <scope>DOMAIN AHA</scope>
</reference>
<reference key="11">
    <citation type="journal article" date="2008" name="Planta">
        <title>Expression of rice heat stress transcription factor OsHsfA2e enhances tolerance to environmental stresses in transgenic Arabidopsis.</title>
        <authorList>
            <person name="Yokotani N."/>
            <person name="Ichikawa T."/>
            <person name="Kondou Y."/>
            <person name="Matsui M."/>
            <person name="Hirochika H."/>
            <person name="Iwabuchi M."/>
            <person name="Oda K."/>
        </authorList>
    </citation>
    <scope>INDUCTION</scope>
</reference>
<keyword id="KW-0025">Alternative splicing</keyword>
<keyword id="KW-0175">Coiled coil</keyword>
<keyword id="KW-0963">Cytoplasm</keyword>
<keyword id="KW-0238">DNA-binding</keyword>
<keyword id="KW-0539">Nucleus</keyword>
<keyword id="KW-0597">Phosphoprotein</keyword>
<keyword id="KW-1185">Reference proteome</keyword>
<keyword id="KW-0346">Stress response</keyword>
<keyword id="KW-0804">Transcription</keyword>
<keyword id="KW-0805">Transcription regulation</keyword>
<accession>Q84MN7</accession>
<accession>Q0DNN3</accession>
<accession>Q10D15</accession>
<accession>Q52MY7</accession>
<dbReference type="EMBL" id="AY332465">
    <property type="protein sequence ID" value="AAQ01151.1"/>
    <property type="molecule type" value="mRNA"/>
</dbReference>
<dbReference type="EMBL" id="AY344486">
    <property type="protein sequence ID" value="AAQ23058.1"/>
    <property type="molecule type" value="mRNA"/>
</dbReference>
<dbReference type="EMBL" id="AY998118">
    <property type="protein sequence ID" value="AAX97827.1"/>
    <property type="molecule type" value="mRNA"/>
</dbReference>
<dbReference type="EMBL" id="AC092558">
    <property type="protein sequence ID" value="AAP13005.1"/>
    <property type="molecule type" value="Genomic_DNA"/>
</dbReference>
<dbReference type="EMBL" id="DP000009">
    <property type="protein sequence ID" value="ABF98829.1"/>
    <property type="molecule type" value="Genomic_DNA"/>
</dbReference>
<dbReference type="EMBL" id="DP000009">
    <property type="protein sequence ID" value="ABF98831.1"/>
    <property type="molecule type" value="Genomic_DNA"/>
</dbReference>
<dbReference type="EMBL" id="AP008209">
    <property type="protein sequence ID" value="BAF13155.2"/>
    <property type="molecule type" value="Genomic_DNA"/>
</dbReference>
<dbReference type="EMBL" id="AP014959">
    <property type="status" value="NOT_ANNOTATED_CDS"/>
    <property type="molecule type" value="Genomic_DNA"/>
</dbReference>
<dbReference type="EMBL" id="CM000140">
    <property type="protein sequence ID" value="EAZ28556.1"/>
    <property type="molecule type" value="Genomic_DNA"/>
</dbReference>
<dbReference type="EMBL" id="AK109590">
    <property type="status" value="NOT_ANNOTATED_CDS"/>
    <property type="molecule type" value="mRNA"/>
</dbReference>
<dbReference type="RefSeq" id="XP_015628945.1">
    <property type="nucleotide sequence ID" value="XM_015773459.1"/>
</dbReference>
<dbReference type="SMR" id="Q84MN7"/>
<dbReference type="FunCoup" id="Q84MN7">
    <property type="interactions" value="17"/>
</dbReference>
<dbReference type="IntAct" id="Q84MN7">
    <property type="interactions" value="1"/>
</dbReference>
<dbReference type="MINT" id="Q84MN7"/>
<dbReference type="STRING" id="39947.Q84MN7"/>
<dbReference type="PaxDb" id="39947-Q84MN7"/>
<dbReference type="KEGG" id="dosa:Os03g0745000"/>
<dbReference type="eggNOG" id="KOG0627">
    <property type="taxonomic scope" value="Eukaryota"/>
</dbReference>
<dbReference type="InParanoid" id="Q84MN7"/>
<dbReference type="OrthoDB" id="60033at2759"/>
<dbReference type="Proteomes" id="UP000000763">
    <property type="component" value="Chromosome 3"/>
</dbReference>
<dbReference type="Proteomes" id="UP000007752">
    <property type="component" value="Chromosome 3"/>
</dbReference>
<dbReference type="Proteomes" id="UP000059680">
    <property type="component" value="Chromosome 3"/>
</dbReference>
<dbReference type="GO" id="GO:0005737">
    <property type="term" value="C:cytoplasm"/>
    <property type="evidence" value="ECO:0007669"/>
    <property type="project" value="UniProtKB-SubCell"/>
</dbReference>
<dbReference type="GO" id="GO:0005634">
    <property type="term" value="C:nucleus"/>
    <property type="evidence" value="ECO:0000318"/>
    <property type="project" value="GO_Central"/>
</dbReference>
<dbReference type="GO" id="GO:0003700">
    <property type="term" value="F:DNA-binding transcription factor activity"/>
    <property type="evidence" value="ECO:0000318"/>
    <property type="project" value="GO_Central"/>
</dbReference>
<dbReference type="GO" id="GO:0043565">
    <property type="term" value="F:sequence-specific DNA binding"/>
    <property type="evidence" value="ECO:0007669"/>
    <property type="project" value="InterPro"/>
</dbReference>
<dbReference type="GO" id="GO:0034605">
    <property type="term" value="P:cellular response to heat"/>
    <property type="evidence" value="ECO:0000318"/>
    <property type="project" value="GO_Central"/>
</dbReference>
<dbReference type="GO" id="GO:0006357">
    <property type="term" value="P:regulation of transcription by RNA polymerase II"/>
    <property type="evidence" value="ECO:0000318"/>
    <property type="project" value="GO_Central"/>
</dbReference>
<dbReference type="FunFam" id="1.10.10.10:FF:000057">
    <property type="entry name" value="Heat shock transcription factor 1"/>
    <property type="match status" value="1"/>
</dbReference>
<dbReference type="Gene3D" id="1.10.10.10">
    <property type="entry name" value="Winged helix-like DNA-binding domain superfamily/Winged helix DNA-binding domain"/>
    <property type="match status" value="1"/>
</dbReference>
<dbReference type="InterPro" id="IPR000232">
    <property type="entry name" value="HSF_DNA-bd"/>
</dbReference>
<dbReference type="InterPro" id="IPR036388">
    <property type="entry name" value="WH-like_DNA-bd_sf"/>
</dbReference>
<dbReference type="InterPro" id="IPR036390">
    <property type="entry name" value="WH_DNA-bd_sf"/>
</dbReference>
<dbReference type="PANTHER" id="PTHR10015">
    <property type="entry name" value="HEAT SHOCK TRANSCRIPTION FACTOR"/>
    <property type="match status" value="1"/>
</dbReference>
<dbReference type="PANTHER" id="PTHR10015:SF279">
    <property type="entry name" value="HEAT STRESS TRANSCRIPTION FACTOR A-2A"/>
    <property type="match status" value="1"/>
</dbReference>
<dbReference type="Pfam" id="PF00447">
    <property type="entry name" value="HSF_DNA-bind"/>
    <property type="match status" value="1"/>
</dbReference>
<dbReference type="PRINTS" id="PR00056">
    <property type="entry name" value="HSFDOMAIN"/>
</dbReference>
<dbReference type="SMART" id="SM00415">
    <property type="entry name" value="HSF"/>
    <property type="match status" value="1"/>
</dbReference>
<dbReference type="SUPFAM" id="SSF46785">
    <property type="entry name" value="Winged helix' DNA-binding domain"/>
    <property type="match status" value="1"/>
</dbReference>
<dbReference type="PROSITE" id="PS00434">
    <property type="entry name" value="HSF_DOMAIN"/>
    <property type="match status" value="1"/>
</dbReference>